<dbReference type="EC" id="2.5.1.6" evidence="1"/>
<dbReference type="EMBL" id="CP001287">
    <property type="protein sequence ID" value="ACK65875.1"/>
    <property type="molecule type" value="Genomic_DNA"/>
</dbReference>
<dbReference type="RefSeq" id="WP_012595147.1">
    <property type="nucleotide sequence ID" value="NC_011726.1"/>
</dbReference>
<dbReference type="SMR" id="B7JX26"/>
<dbReference type="STRING" id="41431.PCC8801_1832"/>
<dbReference type="KEGG" id="cyp:PCC8801_1832"/>
<dbReference type="eggNOG" id="COG0192">
    <property type="taxonomic scope" value="Bacteria"/>
</dbReference>
<dbReference type="HOGENOM" id="CLU_041802_1_1_3"/>
<dbReference type="OrthoDB" id="9801686at2"/>
<dbReference type="UniPathway" id="UPA00315">
    <property type="reaction ID" value="UER00080"/>
</dbReference>
<dbReference type="Proteomes" id="UP000008204">
    <property type="component" value="Chromosome"/>
</dbReference>
<dbReference type="GO" id="GO:0005737">
    <property type="term" value="C:cytoplasm"/>
    <property type="evidence" value="ECO:0007669"/>
    <property type="project" value="UniProtKB-SubCell"/>
</dbReference>
<dbReference type="GO" id="GO:0005524">
    <property type="term" value="F:ATP binding"/>
    <property type="evidence" value="ECO:0007669"/>
    <property type="project" value="UniProtKB-UniRule"/>
</dbReference>
<dbReference type="GO" id="GO:0000287">
    <property type="term" value="F:magnesium ion binding"/>
    <property type="evidence" value="ECO:0007669"/>
    <property type="project" value="UniProtKB-UniRule"/>
</dbReference>
<dbReference type="GO" id="GO:0004478">
    <property type="term" value="F:methionine adenosyltransferase activity"/>
    <property type="evidence" value="ECO:0007669"/>
    <property type="project" value="UniProtKB-UniRule"/>
</dbReference>
<dbReference type="GO" id="GO:0006730">
    <property type="term" value="P:one-carbon metabolic process"/>
    <property type="evidence" value="ECO:0007669"/>
    <property type="project" value="UniProtKB-KW"/>
</dbReference>
<dbReference type="GO" id="GO:0006556">
    <property type="term" value="P:S-adenosylmethionine biosynthetic process"/>
    <property type="evidence" value="ECO:0007669"/>
    <property type="project" value="UniProtKB-UniRule"/>
</dbReference>
<dbReference type="CDD" id="cd18079">
    <property type="entry name" value="S-AdoMet_synt"/>
    <property type="match status" value="1"/>
</dbReference>
<dbReference type="FunFam" id="3.30.300.10:FF:000003">
    <property type="entry name" value="S-adenosylmethionine synthase"/>
    <property type="match status" value="1"/>
</dbReference>
<dbReference type="Gene3D" id="3.30.300.10">
    <property type="match status" value="3"/>
</dbReference>
<dbReference type="HAMAP" id="MF_00086">
    <property type="entry name" value="S_AdoMet_synth1"/>
    <property type="match status" value="1"/>
</dbReference>
<dbReference type="InterPro" id="IPR022631">
    <property type="entry name" value="ADOMET_SYNTHASE_CS"/>
</dbReference>
<dbReference type="InterPro" id="IPR022630">
    <property type="entry name" value="S-AdoMet_synt_C"/>
</dbReference>
<dbReference type="InterPro" id="IPR022629">
    <property type="entry name" value="S-AdoMet_synt_central"/>
</dbReference>
<dbReference type="InterPro" id="IPR022628">
    <property type="entry name" value="S-AdoMet_synt_N"/>
</dbReference>
<dbReference type="InterPro" id="IPR002133">
    <property type="entry name" value="S-AdoMet_synthetase"/>
</dbReference>
<dbReference type="InterPro" id="IPR022636">
    <property type="entry name" value="S-AdoMet_synthetase_sfam"/>
</dbReference>
<dbReference type="NCBIfam" id="TIGR01034">
    <property type="entry name" value="metK"/>
    <property type="match status" value="1"/>
</dbReference>
<dbReference type="PANTHER" id="PTHR11964">
    <property type="entry name" value="S-ADENOSYLMETHIONINE SYNTHETASE"/>
    <property type="match status" value="1"/>
</dbReference>
<dbReference type="Pfam" id="PF02773">
    <property type="entry name" value="S-AdoMet_synt_C"/>
    <property type="match status" value="1"/>
</dbReference>
<dbReference type="Pfam" id="PF02772">
    <property type="entry name" value="S-AdoMet_synt_M"/>
    <property type="match status" value="1"/>
</dbReference>
<dbReference type="Pfam" id="PF00438">
    <property type="entry name" value="S-AdoMet_synt_N"/>
    <property type="match status" value="1"/>
</dbReference>
<dbReference type="PIRSF" id="PIRSF000497">
    <property type="entry name" value="MAT"/>
    <property type="match status" value="1"/>
</dbReference>
<dbReference type="SUPFAM" id="SSF55973">
    <property type="entry name" value="S-adenosylmethionine synthetase"/>
    <property type="match status" value="3"/>
</dbReference>
<dbReference type="PROSITE" id="PS00376">
    <property type="entry name" value="ADOMET_SYNTHASE_1"/>
    <property type="match status" value="1"/>
</dbReference>
<dbReference type="PROSITE" id="PS00377">
    <property type="entry name" value="ADOMET_SYNTHASE_2"/>
    <property type="match status" value="1"/>
</dbReference>
<feature type="chain" id="PRO_1000196702" description="S-adenosylmethionine synthase">
    <location>
        <begin position="1"/>
        <end position="422"/>
    </location>
</feature>
<feature type="region of interest" description="Flexible loop" evidence="1">
    <location>
        <begin position="100"/>
        <end position="110"/>
    </location>
</feature>
<feature type="binding site" description="in other chain" evidence="1">
    <location>
        <position position="16"/>
    </location>
    <ligand>
        <name>ATP</name>
        <dbReference type="ChEBI" id="CHEBI:30616"/>
        <note>ligand shared between two neighboring subunits</note>
    </ligand>
</feature>
<feature type="binding site" evidence="1">
    <location>
        <position position="18"/>
    </location>
    <ligand>
        <name>Mg(2+)</name>
        <dbReference type="ChEBI" id="CHEBI:18420"/>
    </ligand>
</feature>
<feature type="binding site" evidence="1">
    <location>
        <position position="44"/>
    </location>
    <ligand>
        <name>K(+)</name>
        <dbReference type="ChEBI" id="CHEBI:29103"/>
    </ligand>
</feature>
<feature type="binding site" description="in other chain" evidence="1">
    <location>
        <position position="57"/>
    </location>
    <ligand>
        <name>L-methionine</name>
        <dbReference type="ChEBI" id="CHEBI:57844"/>
        <note>ligand shared between two neighboring subunits</note>
    </ligand>
</feature>
<feature type="binding site" description="in other chain" evidence="1">
    <location>
        <position position="100"/>
    </location>
    <ligand>
        <name>L-methionine</name>
        <dbReference type="ChEBI" id="CHEBI:57844"/>
        <note>ligand shared between two neighboring subunits</note>
    </ligand>
</feature>
<feature type="binding site" description="in other chain" evidence="1">
    <location>
        <begin position="175"/>
        <end position="177"/>
    </location>
    <ligand>
        <name>ATP</name>
        <dbReference type="ChEBI" id="CHEBI:30616"/>
        <note>ligand shared between two neighboring subunits</note>
    </ligand>
</feature>
<feature type="binding site" description="in other chain" evidence="1">
    <location>
        <begin position="251"/>
        <end position="252"/>
    </location>
    <ligand>
        <name>ATP</name>
        <dbReference type="ChEBI" id="CHEBI:30616"/>
        <note>ligand shared between two neighboring subunits</note>
    </ligand>
</feature>
<feature type="binding site" evidence="1">
    <location>
        <position position="260"/>
    </location>
    <ligand>
        <name>ATP</name>
        <dbReference type="ChEBI" id="CHEBI:30616"/>
        <note>ligand shared between two neighboring subunits</note>
    </ligand>
</feature>
<feature type="binding site" evidence="1">
    <location>
        <position position="260"/>
    </location>
    <ligand>
        <name>L-methionine</name>
        <dbReference type="ChEBI" id="CHEBI:57844"/>
        <note>ligand shared between two neighboring subunits</note>
    </ligand>
</feature>
<feature type="binding site" description="in other chain" evidence="1">
    <location>
        <begin position="266"/>
        <end position="267"/>
    </location>
    <ligand>
        <name>ATP</name>
        <dbReference type="ChEBI" id="CHEBI:30616"/>
        <note>ligand shared between two neighboring subunits</note>
    </ligand>
</feature>
<feature type="binding site" evidence="1">
    <location>
        <position position="283"/>
    </location>
    <ligand>
        <name>ATP</name>
        <dbReference type="ChEBI" id="CHEBI:30616"/>
        <note>ligand shared between two neighboring subunits</note>
    </ligand>
</feature>
<feature type="binding site" evidence="1">
    <location>
        <position position="287"/>
    </location>
    <ligand>
        <name>ATP</name>
        <dbReference type="ChEBI" id="CHEBI:30616"/>
        <note>ligand shared between two neighboring subunits</note>
    </ligand>
</feature>
<feature type="binding site" description="in other chain" evidence="1">
    <location>
        <position position="291"/>
    </location>
    <ligand>
        <name>L-methionine</name>
        <dbReference type="ChEBI" id="CHEBI:57844"/>
        <note>ligand shared between two neighboring subunits</note>
    </ligand>
</feature>
<reference key="1">
    <citation type="journal article" date="2011" name="MBio">
        <title>Novel metabolic attributes of the genus Cyanothece, comprising a group of unicellular nitrogen-fixing Cyanobacteria.</title>
        <authorList>
            <person name="Bandyopadhyay A."/>
            <person name="Elvitigala T."/>
            <person name="Welsh E."/>
            <person name="Stockel J."/>
            <person name="Liberton M."/>
            <person name="Min H."/>
            <person name="Sherman L.A."/>
            <person name="Pakrasi H.B."/>
        </authorList>
    </citation>
    <scope>NUCLEOTIDE SEQUENCE [LARGE SCALE GENOMIC DNA]</scope>
    <source>
        <strain>PCC 8801 / RF-1</strain>
    </source>
</reference>
<comment type="function">
    <text evidence="1">Catalyzes the formation of S-adenosylmethionine (AdoMet) from methionine and ATP. The overall synthetic reaction is composed of two sequential steps, AdoMet formation and the subsequent tripolyphosphate hydrolysis which occurs prior to release of AdoMet from the enzyme.</text>
</comment>
<comment type="catalytic activity">
    <reaction evidence="1">
        <text>L-methionine + ATP + H2O = S-adenosyl-L-methionine + phosphate + diphosphate</text>
        <dbReference type="Rhea" id="RHEA:21080"/>
        <dbReference type="ChEBI" id="CHEBI:15377"/>
        <dbReference type="ChEBI" id="CHEBI:30616"/>
        <dbReference type="ChEBI" id="CHEBI:33019"/>
        <dbReference type="ChEBI" id="CHEBI:43474"/>
        <dbReference type="ChEBI" id="CHEBI:57844"/>
        <dbReference type="ChEBI" id="CHEBI:59789"/>
        <dbReference type="EC" id="2.5.1.6"/>
    </reaction>
</comment>
<comment type="cofactor">
    <cofactor evidence="1">
        <name>Mg(2+)</name>
        <dbReference type="ChEBI" id="CHEBI:18420"/>
    </cofactor>
    <text evidence="1">Binds 2 divalent ions per subunit.</text>
</comment>
<comment type="cofactor">
    <cofactor evidence="1">
        <name>K(+)</name>
        <dbReference type="ChEBI" id="CHEBI:29103"/>
    </cofactor>
    <text evidence="1">Binds 1 potassium ion per subunit.</text>
</comment>
<comment type="pathway">
    <text evidence="1">Amino-acid biosynthesis; S-adenosyl-L-methionine biosynthesis; S-adenosyl-L-methionine from L-methionine: step 1/1.</text>
</comment>
<comment type="subunit">
    <text evidence="1">Homotetramer; dimer of dimers.</text>
</comment>
<comment type="subcellular location">
    <subcellularLocation>
        <location evidence="1">Cytoplasm</location>
    </subcellularLocation>
</comment>
<comment type="similarity">
    <text evidence="1">Belongs to the AdoMet synthase family.</text>
</comment>
<proteinExistence type="inferred from homology"/>
<organism>
    <name type="scientific">Rippkaea orientalis (strain PCC 8801 / RF-1)</name>
    <name type="common">Cyanothece sp. (strain PCC 8801)</name>
    <dbReference type="NCBI Taxonomy" id="41431"/>
    <lineage>
        <taxon>Bacteria</taxon>
        <taxon>Bacillati</taxon>
        <taxon>Cyanobacteriota</taxon>
        <taxon>Cyanophyceae</taxon>
        <taxon>Oscillatoriophycideae</taxon>
        <taxon>Chroococcales</taxon>
        <taxon>Aphanothecaceae</taxon>
        <taxon>Rippkaea</taxon>
        <taxon>Rippkaea orientalis</taxon>
    </lineage>
</organism>
<keyword id="KW-0067">ATP-binding</keyword>
<keyword id="KW-0963">Cytoplasm</keyword>
<keyword id="KW-0460">Magnesium</keyword>
<keyword id="KW-0479">Metal-binding</keyword>
<keyword id="KW-0547">Nucleotide-binding</keyword>
<keyword id="KW-0554">One-carbon metabolism</keyword>
<keyword id="KW-0630">Potassium</keyword>
<keyword id="KW-1185">Reference proteome</keyword>
<keyword id="KW-0808">Transferase</keyword>
<name>METK_RIPO1</name>
<sequence length="422" mass="45902">MSRRYLFSSESVTEGHPDKICDQISDTILDALLYHDDHSRVAAEVVVNTGLVLITGEITSKAHVNFVELARKKIAEIGYTDADNGFSANSCAVLVAIDEQSPDISQGVSAAHEQRESLSNDELDQIGAGDQGIMFGYACNETPEFMPLPISLAHRISRRLAAVRKMGELPYLRPDGKTQVSIVYEDGKPVGIDTILISTQHTETIDSLTENSAVQAKIKSDLWEAVVQPVFGDIEIKPNQDTRFLVNPTGKFVIGGPQGDAGLTGRKIIVDTYGGYSRHGGGAFSGKDPTKVDRSAAYACRYVAKNIVAAGLADKCEVQVSYAIGVARPVSILVETFGTGKVDEDKLLKVVQELFELRPAGILQTLNLRELPSQRGGRFYQDVAAYGHFGRTDLDLPWEYTDKANLLKEAFAIPLSEVRVGV</sequence>
<evidence type="ECO:0000255" key="1">
    <source>
        <dbReference type="HAMAP-Rule" id="MF_00086"/>
    </source>
</evidence>
<accession>B7JX26</accession>
<protein>
    <recommendedName>
        <fullName evidence="1">S-adenosylmethionine synthase</fullName>
        <shortName evidence="1">AdoMet synthase</shortName>
        <ecNumber evidence="1">2.5.1.6</ecNumber>
    </recommendedName>
    <alternativeName>
        <fullName evidence="1">MAT</fullName>
    </alternativeName>
    <alternativeName>
        <fullName evidence="1">Methionine adenosyltransferase</fullName>
    </alternativeName>
</protein>
<gene>
    <name evidence="1" type="primary">metK</name>
    <name type="ordered locus">PCC8801_1832</name>
</gene>